<feature type="signal peptide" evidence="1">
    <location>
        <begin position="1"/>
        <end position="14"/>
    </location>
</feature>
<feature type="chain" id="PRO_0000344484" description="Adhesin MafA 2/3">
    <location>
        <begin position="15"/>
        <end position="313"/>
    </location>
</feature>
<feature type="region of interest" description="Disordered" evidence="2">
    <location>
        <begin position="282"/>
        <end position="313"/>
    </location>
</feature>
<feature type="compositionally biased region" description="Polar residues" evidence="2">
    <location>
        <begin position="282"/>
        <end position="298"/>
    </location>
</feature>
<feature type="lipid moiety-binding region" description="N-palmitoyl cysteine" evidence="1">
    <location>
        <position position="15"/>
    </location>
</feature>
<feature type="lipid moiety-binding region" description="S-diacylglycerol cysteine" evidence="1">
    <location>
        <position position="15"/>
    </location>
</feature>
<organism>
    <name type="scientific">Neisseria gonorrhoeae (strain ATCC 700825 / FA 1090)</name>
    <dbReference type="NCBI Taxonomy" id="242231"/>
    <lineage>
        <taxon>Bacteria</taxon>
        <taxon>Pseudomonadati</taxon>
        <taxon>Pseudomonadota</taxon>
        <taxon>Betaproteobacteria</taxon>
        <taxon>Neisseriales</taxon>
        <taxon>Neisseriaceae</taxon>
        <taxon>Neisseria</taxon>
    </lineage>
</organism>
<name>MAFA2_NEIG1</name>
<keyword id="KW-0130">Cell adhesion</keyword>
<keyword id="KW-0998">Cell outer membrane</keyword>
<keyword id="KW-0449">Lipoprotein</keyword>
<keyword id="KW-0472">Membrane</keyword>
<keyword id="KW-0564">Palmitate</keyword>
<keyword id="KW-1185">Reference proteome</keyword>
<keyword id="KW-0732">Signal</keyword>
<keyword id="KW-0843">Virulence</keyword>
<sequence length="313" mass="33926">MKTLLLLIPLVLTACGTLTGIPAHGGGKRFAVEQELVAASSRAAVKEMDLSALKGRKAALYVSVMGDQGSGNISGGRYSIDALIRGGYHNNPDSATRYSYPAYDTTATTKSDALSGVTTSTSLLNAPAAALTKNNGRKGERSAGLSVNGTGDYRNETLLANPRDVSFLTNLIQTVFYLRGIEVVPPEYADTDVFVTVDVFGTVRSRTELHLYNAETLKAQTKLEYFAVDRDSRKLLIAPKTAAYESQYQEQYALWMGPYSVGKTVKASDRLMVDFSDITPYGDTTAQNRPDFKQNNGKNPDVGNEVIRRRKGG</sequence>
<comment type="subcellular location">
    <subcellularLocation>
        <location evidence="3">Cell outer membrane</location>
        <topology evidence="1">Lipid-anchor</topology>
    </subcellularLocation>
</comment>
<comment type="similarity">
    <text evidence="3">Belongs to the MafA family.</text>
</comment>
<protein>
    <recommendedName>
        <fullName>Adhesin MafA 2/3</fullName>
    </recommendedName>
</protein>
<dbReference type="EMBL" id="AE004969">
    <property type="protein sequence ID" value="AAW90041.1"/>
    <property type="molecule type" value="Genomic_DNA"/>
</dbReference>
<dbReference type="EMBL" id="AE004969">
    <property type="protein sequence ID" value="AAW90213.1"/>
    <property type="molecule type" value="Genomic_DNA"/>
</dbReference>
<dbReference type="RefSeq" id="YP_208453.1">
    <property type="nucleotide sequence ID" value="NC_002946.2"/>
</dbReference>
<dbReference type="RefSeq" id="YP_208625.1">
    <property type="nucleotide sequence ID" value="NC_002946.2"/>
</dbReference>
<dbReference type="STRING" id="242231.NGO_1393"/>
<dbReference type="KEGG" id="ngo:NGO_1393"/>
<dbReference type="KEGG" id="ngo:NGO_1584"/>
<dbReference type="PATRIC" id="fig|242231.10.peg.1637"/>
<dbReference type="HOGENOM" id="CLU_985210_0_0_4"/>
<dbReference type="Proteomes" id="UP000000535">
    <property type="component" value="Chromosome"/>
</dbReference>
<dbReference type="GO" id="GO:0009279">
    <property type="term" value="C:cell outer membrane"/>
    <property type="evidence" value="ECO:0007669"/>
    <property type="project" value="UniProtKB-SubCell"/>
</dbReference>
<dbReference type="GO" id="GO:0007155">
    <property type="term" value="P:cell adhesion"/>
    <property type="evidence" value="ECO:0007669"/>
    <property type="project" value="UniProtKB-KW"/>
</dbReference>
<dbReference type="PROSITE" id="PS51257">
    <property type="entry name" value="PROKAR_LIPOPROTEIN"/>
    <property type="match status" value="1"/>
</dbReference>
<accession>Q5F6H4</accession>
<reference key="1">
    <citation type="submission" date="2003-03" db="EMBL/GenBank/DDBJ databases">
        <title>The complete genome sequence of Neisseria gonorrhoeae.</title>
        <authorList>
            <person name="Lewis L.A."/>
            <person name="Gillaspy A.F."/>
            <person name="McLaughlin R.E."/>
            <person name="Gipson M."/>
            <person name="Ducey T.F."/>
            <person name="Ownbey T."/>
            <person name="Hartman K."/>
            <person name="Nydick C."/>
            <person name="Carson M.B."/>
            <person name="Vaughn J."/>
            <person name="Thomson C."/>
            <person name="Song L."/>
            <person name="Lin S."/>
            <person name="Yuan X."/>
            <person name="Najar F."/>
            <person name="Zhan M."/>
            <person name="Ren Q."/>
            <person name="Zhu H."/>
            <person name="Qi S."/>
            <person name="Kenton S.M."/>
            <person name="Lai H."/>
            <person name="White J.D."/>
            <person name="Clifton S."/>
            <person name="Roe B.A."/>
            <person name="Dyer D.W."/>
        </authorList>
    </citation>
    <scope>NUCLEOTIDE SEQUENCE [LARGE SCALE GENOMIC DNA]</scope>
    <source>
        <strain>ATCC 700825 / FA 1090</strain>
    </source>
</reference>
<evidence type="ECO:0000255" key="1">
    <source>
        <dbReference type="PROSITE-ProRule" id="PRU00303"/>
    </source>
</evidence>
<evidence type="ECO:0000256" key="2">
    <source>
        <dbReference type="SAM" id="MobiDB-lite"/>
    </source>
</evidence>
<evidence type="ECO:0000305" key="3"/>
<gene>
    <name type="primary">mafA2</name>
    <name type="ordered locus">NGO_1393</name>
</gene>
<gene>
    <name type="primary">mafA3</name>
    <name type="ordered locus">NGO_1584</name>
</gene>
<proteinExistence type="inferred from homology"/>